<sequence>MSNLWRNLKSVRLPFRRAPTLPLYNVPVRRSISSSSSIPPSSSPPPRLTITQRVKELTKKYGWWSLGVYIGISVLDFSASFVLVRTLGAERIGYLEHSILNSIRRYFNWEIPESTASGEPEAYHSSIWTELAFAYGIHKALVVARVPLTAAIVPPLAKRFRGPRIRP</sequence>
<gene>
    <name type="ORF">SPBC106.07c</name>
</gene>
<organism>
    <name type="scientific">Schizosaccharomyces pombe (strain 972 / ATCC 24843)</name>
    <name type="common">Fission yeast</name>
    <dbReference type="NCBI Taxonomy" id="284812"/>
    <lineage>
        <taxon>Eukaryota</taxon>
        <taxon>Fungi</taxon>
        <taxon>Dikarya</taxon>
        <taxon>Ascomycota</taxon>
        <taxon>Taphrinomycotina</taxon>
        <taxon>Schizosaccharomycetes</taxon>
        <taxon>Schizosaccharomycetales</taxon>
        <taxon>Schizosaccharomycetaceae</taxon>
        <taxon>Schizosaccharomyces</taxon>
    </lineage>
</organism>
<feature type="chain" id="PRO_0000116514" description="Uncharacterized protein C106.07c">
    <location>
        <begin position="1"/>
        <end position="167"/>
    </location>
</feature>
<dbReference type="EMBL" id="CU329671">
    <property type="protein sequence ID" value="CAB53723.1"/>
    <property type="molecule type" value="Genomic_DNA"/>
</dbReference>
<dbReference type="PIR" id="T39264">
    <property type="entry name" value="T39264"/>
</dbReference>
<dbReference type="FunCoup" id="Q9URV4">
    <property type="interactions" value="220"/>
</dbReference>
<dbReference type="STRING" id="284812.Q9URV4"/>
<dbReference type="iPTMnet" id="Q9URV4"/>
<dbReference type="PaxDb" id="4896-SPBC106.07c.1"/>
<dbReference type="EnsemblFungi" id="SPBC106.07c.1">
    <property type="protein sequence ID" value="SPBC106.07c.1:pep"/>
    <property type="gene ID" value="SPBC106.07c"/>
</dbReference>
<dbReference type="KEGG" id="spo:2540058"/>
<dbReference type="PomBase" id="SPBC106.07c"/>
<dbReference type="VEuPathDB" id="FungiDB:SPBC106.07c"/>
<dbReference type="eggNOG" id="KOG4526">
    <property type="taxonomic scope" value="Eukaryota"/>
</dbReference>
<dbReference type="HOGENOM" id="CLU_059211_3_0_1"/>
<dbReference type="InParanoid" id="Q9URV4"/>
<dbReference type="OMA" id="YHSSIWT"/>
<dbReference type="PhylomeDB" id="Q9URV4"/>
<dbReference type="PRO" id="PR:Q9URV4"/>
<dbReference type="Proteomes" id="UP000002485">
    <property type="component" value="Chromosome II"/>
</dbReference>
<dbReference type="GO" id="GO:0005739">
    <property type="term" value="C:mitochondrion"/>
    <property type="evidence" value="ECO:0007005"/>
    <property type="project" value="PomBase"/>
</dbReference>
<dbReference type="GO" id="GO:0051604">
    <property type="term" value="P:protein maturation"/>
    <property type="evidence" value="ECO:0000266"/>
    <property type="project" value="PomBase"/>
</dbReference>
<dbReference type="InterPro" id="IPR045866">
    <property type="entry name" value="FAM210A/B-like"/>
</dbReference>
<dbReference type="InterPro" id="IPR009688">
    <property type="entry name" value="FAM210A/B-like_dom"/>
</dbReference>
<dbReference type="PANTHER" id="PTHR21377">
    <property type="entry name" value="PROTEIN FAM210B, MITOCHONDRIAL"/>
    <property type="match status" value="1"/>
</dbReference>
<dbReference type="PANTHER" id="PTHR21377:SF0">
    <property type="entry name" value="PROTEIN FAM210B, MITOCHONDRIAL"/>
    <property type="match status" value="1"/>
</dbReference>
<dbReference type="Pfam" id="PF06916">
    <property type="entry name" value="FAM210A-B_dom"/>
    <property type="match status" value="1"/>
</dbReference>
<protein>
    <recommendedName>
        <fullName>Uncharacterized protein C106.07c</fullName>
    </recommendedName>
</protein>
<reference key="1">
    <citation type="journal article" date="2002" name="Nature">
        <title>The genome sequence of Schizosaccharomyces pombe.</title>
        <authorList>
            <person name="Wood V."/>
            <person name="Gwilliam R."/>
            <person name="Rajandream M.A."/>
            <person name="Lyne M.H."/>
            <person name="Lyne R."/>
            <person name="Stewart A."/>
            <person name="Sgouros J.G."/>
            <person name="Peat N."/>
            <person name="Hayles J."/>
            <person name="Baker S.G."/>
            <person name="Basham D."/>
            <person name="Bowman S."/>
            <person name="Brooks K."/>
            <person name="Brown D."/>
            <person name="Brown S."/>
            <person name="Chillingworth T."/>
            <person name="Churcher C.M."/>
            <person name="Collins M."/>
            <person name="Connor R."/>
            <person name="Cronin A."/>
            <person name="Davis P."/>
            <person name="Feltwell T."/>
            <person name="Fraser A."/>
            <person name="Gentles S."/>
            <person name="Goble A."/>
            <person name="Hamlin N."/>
            <person name="Harris D.E."/>
            <person name="Hidalgo J."/>
            <person name="Hodgson G."/>
            <person name="Holroyd S."/>
            <person name="Hornsby T."/>
            <person name="Howarth S."/>
            <person name="Huckle E.J."/>
            <person name="Hunt S."/>
            <person name="Jagels K."/>
            <person name="James K.D."/>
            <person name="Jones L."/>
            <person name="Jones M."/>
            <person name="Leather S."/>
            <person name="McDonald S."/>
            <person name="McLean J."/>
            <person name="Mooney P."/>
            <person name="Moule S."/>
            <person name="Mungall K.L."/>
            <person name="Murphy L.D."/>
            <person name="Niblett D."/>
            <person name="Odell C."/>
            <person name="Oliver K."/>
            <person name="O'Neil S."/>
            <person name="Pearson D."/>
            <person name="Quail M.A."/>
            <person name="Rabbinowitsch E."/>
            <person name="Rutherford K.M."/>
            <person name="Rutter S."/>
            <person name="Saunders D."/>
            <person name="Seeger K."/>
            <person name="Sharp S."/>
            <person name="Skelton J."/>
            <person name="Simmonds M.N."/>
            <person name="Squares R."/>
            <person name="Squares S."/>
            <person name="Stevens K."/>
            <person name="Taylor K."/>
            <person name="Taylor R.G."/>
            <person name="Tivey A."/>
            <person name="Walsh S.V."/>
            <person name="Warren T."/>
            <person name="Whitehead S."/>
            <person name="Woodward J.R."/>
            <person name="Volckaert G."/>
            <person name="Aert R."/>
            <person name="Robben J."/>
            <person name="Grymonprez B."/>
            <person name="Weltjens I."/>
            <person name="Vanstreels E."/>
            <person name="Rieger M."/>
            <person name="Schaefer M."/>
            <person name="Mueller-Auer S."/>
            <person name="Gabel C."/>
            <person name="Fuchs M."/>
            <person name="Duesterhoeft A."/>
            <person name="Fritzc C."/>
            <person name="Holzer E."/>
            <person name="Moestl D."/>
            <person name="Hilbert H."/>
            <person name="Borzym K."/>
            <person name="Langer I."/>
            <person name="Beck A."/>
            <person name="Lehrach H."/>
            <person name="Reinhardt R."/>
            <person name="Pohl T.M."/>
            <person name="Eger P."/>
            <person name="Zimmermann W."/>
            <person name="Wedler H."/>
            <person name="Wambutt R."/>
            <person name="Purnelle B."/>
            <person name="Goffeau A."/>
            <person name="Cadieu E."/>
            <person name="Dreano S."/>
            <person name="Gloux S."/>
            <person name="Lelaure V."/>
            <person name="Mottier S."/>
            <person name="Galibert F."/>
            <person name="Aves S.J."/>
            <person name="Xiang Z."/>
            <person name="Hunt C."/>
            <person name="Moore K."/>
            <person name="Hurst S.M."/>
            <person name="Lucas M."/>
            <person name="Rochet M."/>
            <person name="Gaillardin C."/>
            <person name="Tallada V.A."/>
            <person name="Garzon A."/>
            <person name="Thode G."/>
            <person name="Daga R.R."/>
            <person name="Cruzado L."/>
            <person name="Jimenez J."/>
            <person name="Sanchez M."/>
            <person name="del Rey F."/>
            <person name="Benito J."/>
            <person name="Dominguez A."/>
            <person name="Revuelta J.L."/>
            <person name="Moreno S."/>
            <person name="Armstrong J."/>
            <person name="Forsburg S.L."/>
            <person name="Cerutti L."/>
            <person name="Lowe T."/>
            <person name="McCombie W.R."/>
            <person name="Paulsen I."/>
            <person name="Potashkin J."/>
            <person name="Shpakovski G.V."/>
            <person name="Ussery D."/>
            <person name="Barrell B.G."/>
            <person name="Nurse P."/>
        </authorList>
    </citation>
    <scope>NUCLEOTIDE SEQUENCE [LARGE SCALE GENOMIC DNA]</scope>
    <source>
        <strain>972 / ATCC 24843</strain>
    </source>
</reference>
<accession>Q9URV4</accession>
<evidence type="ECO:0000305" key="1"/>
<comment type="similarity">
    <text evidence="1">To A.thaliana At2g20940.</text>
</comment>
<proteinExistence type="predicted"/>
<keyword id="KW-1185">Reference proteome</keyword>
<name>YBL7_SCHPO</name>